<dbReference type="EMBL" id="CP000822">
    <property type="protein sequence ID" value="ABV11656.1"/>
    <property type="molecule type" value="Genomic_DNA"/>
</dbReference>
<dbReference type="STRING" id="290338.CKO_00500"/>
<dbReference type="KEGG" id="cko:CKO_00500"/>
<dbReference type="HOGENOM" id="CLU_128746_0_0_6"/>
<dbReference type="OrthoDB" id="7066670at2"/>
<dbReference type="Proteomes" id="UP000008148">
    <property type="component" value="Chromosome"/>
</dbReference>
<dbReference type="GO" id="GO:0005886">
    <property type="term" value="C:plasma membrane"/>
    <property type="evidence" value="ECO:0007669"/>
    <property type="project" value="UniProtKB-SubCell"/>
</dbReference>
<dbReference type="HAMAP" id="MF_01101">
    <property type="entry name" value="UPF0208"/>
    <property type="match status" value="1"/>
</dbReference>
<dbReference type="InterPro" id="IPR007334">
    <property type="entry name" value="UPF0208"/>
</dbReference>
<dbReference type="NCBIfam" id="NF002493">
    <property type="entry name" value="PRK01816.1"/>
    <property type="match status" value="1"/>
</dbReference>
<dbReference type="Pfam" id="PF04217">
    <property type="entry name" value="DUF412"/>
    <property type="match status" value="1"/>
</dbReference>
<evidence type="ECO:0000255" key="1">
    <source>
        <dbReference type="HAMAP-Rule" id="MF_01101"/>
    </source>
</evidence>
<proteinExistence type="inferred from homology"/>
<feature type="chain" id="PRO_1000064966" description="UPF0208 membrane protein CKO_00500">
    <location>
        <begin position="1"/>
        <end position="151"/>
    </location>
</feature>
<feature type="transmembrane region" description="Helical" evidence="1">
    <location>
        <begin position="46"/>
        <end position="65"/>
    </location>
</feature>
<feature type="transmembrane region" description="Helical" evidence="1">
    <location>
        <begin position="69"/>
        <end position="91"/>
    </location>
</feature>
<organism>
    <name type="scientific">Citrobacter koseri (strain ATCC BAA-895 / CDC 4225-83 / SGSC4696)</name>
    <dbReference type="NCBI Taxonomy" id="290338"/>
    <lineage>
        <taxon>Bacteria</taxon>
        <taxon>Pseudomonadati</taxon>
        <taxon>Pseudomonadota</taxon>
        <taxon>Gammaproteobacteria</taxon>
        <taxon>Enterobacterales</taxon>
        <taxon>Enterobacteriaceae</taxon>
        <taxon>Citrobacter</taxon>
    </lineage>
</organism>
<sequence length="151" mass="17249">MSTPDNRSVNFFSLFRRGQHYAKTWPMEKRLAPVFVENRVIRMTRYAIRFMPPIAVFTLCWQIALGGQLGPAVATALFALSLPMQGMWWLGKRSVTPLPPSILNWFYEVRGKLQEAGQALSPVEGKPDYQALADTLKRAFKQLDKTFLDDL</sequence>
<gene>
    <name type="ordered locus">CKO_00500</name>
</gene>
<name>Y500_CITK8</name>
<protein>
    <recommendedName>
        <fullName evidence="1">UPF0208 membrane protein CKO_00500</fullName>
    </recommendedName>
</protein>
<comment type="subcellular location">
    <subcellularLocation>
        <location evidence="1">Cell inner membrane</location>
        <topology evidence="1">Multi-pass membrane protein</topology>
    </subcellularLocation>
</comment>
<comment type="similarity">
    <text evidence="1">Belongs to the UPF0208 family.</text>
</comment>
<accession>A8ADU3</accession>
<keyword id="KW-0997">Cell inner membrane</keyword>
<keyword id="KW-1003">Cell membrane</keyword>
<keyword id="KW-0472">Membrane</keyword>
<keyword id="KW-1185">Reference proteome</keyword>
<keyword id="KW-0812">Transmembrane</keyword>
<keyword id="KW-1133">Transmembrane helix</keyword>
<reference key="1">
    <citation type="submission" date="2007-08" db="EMBL/GenBank/DDBJ databases">
        <authorList>
            <consortium name="The Citrobacter koseri Genome Sequencing Project"/>
            <person name="McClelland M."/>
            <person name="Sanderson E.K."/>
            <person name="Porwollik S."/>
            <person name="Spieth J."/>
            <person name="Clifton W.S."/>
            <person name="Latreille P."/>
            <person name="Courtney L."/>
            <person name="Wang C."/>
            <person name="Pepin K."/>
            <person name="Bhonagiri V."/>
            <person name="Nash W."/>
            <person name="Johnson M."/>
            <person name="Thiruvilangam P."/>
            <person name="Wilson R."/>
        </authorList>
    </citation>
    <scope>NUCLEOTIDE SEQUENCE [LARGE SCALE GENOMIC DNA]</scope>
    <source>
        <strain>ATCC BAA-895 / CDC 4225-83 / SGSC4696</strain>
    </source>
</reference>